<protein>
    <recommendedName>
        <fullName evidence="2">Palmitoyl-protein thioesterase ABHD10, mitochondrial</fullName>
        <ecNumber evidence="2">3.1.2.22</ecNumber>
    </recommendedName>
    <alternativeName>
        <fullName evidence="2">Acyl-protein thioesterase ABHD10</fullName>
    </alternativeName>
    <alternativeName>
        <fullName evidence="2">Alpha/beta hydrolase domain-containing protein 10</fullName>
        <shortName evidence="2">Abhydrolase domain-containing protein 10</shortName>
    </alternativeName>
    <alternativeName>
        <fullName evidence="2">Mycophenolic acid acyl-glucuronide esterase, mitochondrial</fullName>
        <ecNumber evidence="2">3.1.1.93</ecNumber>
    </alternativeName>
</protein>
<name>ABHDA_RAT</name>
<gene>
    <name evidence="6" type="primary">Abhd10</name>
</gene>
<feature type="transit peptide" description="Mitochondrion" evidence="3">
    <location>
        <begin position="1"/>
        <end position="43"/>
    </location>
</feature>
<feature type="chain" id="PRO_0000280736" description="Palmitoyl-protein thioesterase ABHD10, mitochondrial">
    <location>
        <begin position="44"/>
        <end position="297"/>
    </location>
</feature>
<feature type="domain" description="AB hydrolase-1" evidence="3">
    <location>
        <begin position="69"/>
        <end position="181"/>
    </location>
</feature>
<feature type="active site" description="Charge relay system" evidence="2">
    <location>
        <position position="143"/>
    </location>
</feature>
<feature type="active site" description="Charge relay system" evidence="1">
    <location>
        <position position="240"/>
    </location>
</feature>
<feature type="active site" description="Charge relay system" evidence="1">
    <location>
        <position position="270"/>
    </location>
</feature>
<sequence>MAAWVPCRKWGWAAVSFGRHRGLIASLARKPPWAWWLSACRQKTTLSFLKRPELPSLAYKRLKGKNPGIIFIPGYLSNMNGKKAVAIEEFCKSIGHAFIRFDYSGVGSSDGNLAECSVGKWRKDVLSILDDIAEGPQILVGSSLGGWLMLHAAIARPEKVIALIGIASATDGVVTQFHSLPVEMQKEIEMKGEWSLPSKYNKEGYYSIPYSFIKEAAHHCLLHSPIPVTCPVRLLHGMKDEIVPWHRSLQVADRVVSPDVDVILRKHSDHRMKETADIHLLICTIDDLIDKLSTVTH</sequence>
<evidence type="ECO:0000250" key="1">
    <source>
        <dbReference type="UniProtKB" id="Q8N2K0"/>
    </source>
</evidence>
<evidence type="ECO:0000250" key="2">
    <source>
        <dbReference type="UniProtKB" id="Q9NUJ1"/>
    </source>
</evidence>
<evidence type="ECO:0000255" key="3"/>
<evidence type="ECO:0000269" key="4">
    <source>
    </source>
</evidence>
<evidence type="ECO:0000305" key="5"/>
<evidence type="ECO:0000312" key="6">
    <source>
        <dbReference type="RGD" id="1308084"/>
    </source>
</evidence>
<accession>Q5I0K5</accession>
<proteinExistence type="evidence at protein level"/>
<reference key="1">
    <citation type="journal article" date="2004" name="Genome Res.">
        <title>The status, quality, and expansion of the NIH full-length cDNA project: the Mammalian Gene Collection (MGC).</title>
        <authorList>
            <consortium name="The MGC Project Team"/>
        </authorList>
    </citation>
    <scope>NUCLEOTIDE SEQUENCE [LARGE SCALE MRNA] OF 2-297</scope>
    <source>
        <tissue>Brain</tissue>
        <tissue>Liver</tissue>
    </source>
</reference>
<reference key="2">
    <citation type="journal article" date="2011" name="J. Androl.">
        <title>Differential proteomics leads to identification of domain specific epididymal sperm proteins.</title>
        <authorList>
            <person name="Suryawanshi A.R."/>
            <person name="Khan S.A."/>
            <person name="Gajbhiye R.K."/>
            <person name="Gurav M.Y."/>
            <person name="Khole V.V."/>
        </authorList>
    </citation>
    <scope>IDENTIFICATION BY MASS SPECTROMETRY</scope>
    <scope>TISSUE SPECIFICITY</scope>
    <source>
        <strain>Holtzman</strain>
        <tissue>Sperm</tissue>
    </source>
</reference>
<organism>
    <name type="scientific">Rattus norvegicus</name>
    <name type="common">Rat</name>
    <dbReference type="NCBI Taxonomy" id="10116"/>
    <lineage>
        <taxon>Eukaryota</taxon>
        <taxon>Metazoa</taxon>
        <taxon>Chordata</taxon>
        <taxon>Craniata</taxon>
        <taxon>Vertebrata</taxon>
        <taxon>Euteleostomi</taxon>
        <taxon>Mammalia</taxon>
        <taxon>Eutheria</taxon>
        <taxon>Euarchontoglires</taxon>
        <taxon>Glires</taxon>
        <taxon>Rodentia</taxon>
        <taxon>Myomorpha</taxon>
        <taxon>Muroidea</taxon>
        <taxon>Muridae</taxon>
        <taxon>Murinae</taxon>
        <taxon>Rattus</taxon>
    </lineage>
</organism>
<comment type="function">
    <text evidence="2">Acts as an acyl-protein thioesterase that hydrolyzes fatty acids from acylated residues in proteins. Regulates the mitochondrial S-depalmitoylation of the nucleophilic active site residue of peroxiredoxin-5/PRDX5, a key antioxidant protein, therefore modulating mitochondrial antioxidant ability. Also catalyzes the deglucuronidation of mycophenolic acid acyl-glucuronide, an active metabolite of the immunosuppressant drug mycophenolate.</text>
</comment>
<comment type="catalytic activity">
    <reaction evidence="2">
        <text>S-hexadecanoyl-L-cysteinyl-[protein] + H2O = L-cysteinyl-[protein] + hexadecanoate + H(+)</text>
        <dbReference type="Rhea" id="RHEA:19233"/>
        <dbReference type="Rhea" id="RHEA-COMP:10131"/>
        <dbReference type="Rhea" id="RHEA-COMP:11032"/>
        <dbReference type="ChEBI" id="CHEBI:7896"/>
        <dbReference type="ChEBI" id="CHEBI:15377"/>
        <dbReference type="ChEBI" id="CHEBI:15378"/>
        <dbReference type="ChEBI" id="CHEBI:29950"/>
        <dbReference type="ChEBI" id="CHEBI:74151"/>
        <dbReference type="EC" id="3.1.2.22"/>
    </reaction>
    <physiologicalReaction direction="left-to-right" evidence="2">
        <dbReference type="Rhea" id="RHEA:19234"/>
    </physiologicalReaction>
</comment>
<comment type="catalytic activity">
    <reaction evidence="2">
        <text>mycophenolic acid O-acyl-beta-D-glucuronide + H2O = mycophenolate + D-glucuronate + H(+)</text>
        <dbReference type="Rhea" id="RHEA:34179"/>
        <dbReference type="ChEBI" id="CHEBI:15377"/>
        <dbReference type="ChEBI" id="CHEBI:15378"/>
        <dbReference type="ChEBI" id="CHEBI:58720"/>
        <dbReference type="ChEBI" id="CHEBI:62932"/>
        <dbReference type="ChEBI" id="CHEBI:66982"/>
        <dbReference type="EC" id="3.1.1.93"/>
    </reaction>
    <physiologicalReaction direction="left-to-right" evidence="2">
        <dbReference type="Rhea" id="RHEA:34180"/>
    </physiologicalReaction>
</comment>
<comment type="activity regulation">
    <text evidence="2">Inhibited by palmostatin-B.</text>
</comment>
<comment type="subcellular location">
    <subcellularLocation>
        <location evidence="2">Mitochondrion</location>
    </subcellularLocation>
</comment>
<comment type="tissue specificity">
    <text evidence="4">Expressed in epididymal sperm but not in testicular sperm (at protein level).</text>
</comment>
<comment type="similarity">
    <text evidence="5">Belongs to the AB hydrolase superfamily.</text>
</comment>
<keyword id="KW-0378">Hydrolase</keyword>
<keyword id="KW-0496">Mitochondrion</keyword>
<keyword id="KW-1185">Reference proteome</keyword>
<keyword id="KW-0809">Transit peptide</keyword>
<dbReference type="EC" id="3.1.2.22" evidence="2"/>
<dbReference type="EC" id="3.1.1.93" evidence="2"/>
<dbReference type="EMBL" id="BC088235">
    <property type="protein sequence ID" value="AAH88235.1"/>
    <property type="molecule type" value="mRNA"/>
</dbReference>
<dbReference type="RefSeq" id="NP_001116824.1">
    <property type="nucleotide sequence ID" value="NM_001123352.1"/>
</dbReference>
<dbReference type="RefSeq" id="XP_008766895.2">
    <property type="nucleotide sequence ID" value="XM_008768673.2"/>
</dbReference>
<dbReference type="SMR" id="Q5I0K5"/>
<dbReference type="FunCoup" id="Q5I0K5">
    <property type="interactions" value="986"/>
</dbReference>
<dbReference type="STRING" id="10116.ENSRNOP00000043990"/>
<dbReference type="ESTHER" id="rat-abhda">
    <property type="family name" value="ABHD10"/>
</dbReference>
<dbReference type="iPTMnet" id="Q5I0K5"/>
<dbReference type="PhosphoSitePlus" id="Q5I0K5"/>
<dbReference type="PaxDb" id="10116-ENSRNOP00000043990"/>
<dbReference type="GeneID" id="303953"/>
<dbReference type="KEGG" id="rno:303953"/>
<dbReference type="UCSC" id="RGD:1308084">
    <property type="organism name" value="rat"/>
</dbReference>
<dbReference type="AGR" id="RGD:1308084"/>
<dbReference type="CTD" id="55347"/>
<dbReference type="RGD" id="1308084">
    <property type="gene designation" value="Abhd10"/>
</dbReference>
<dbReference type="VEuPathDB" id="HostDB:ENSRNOG00000054334"/>
<dbReference type="eggNOG" id="ENOG502QT21">
    <property type="taxonomic scope" value="Eukaryota"/>
</dbReference>
<dbReference type="HOGENOM" id="CLU_066961_0_0_1"/>
<dbReference type="InParanoid" id="Q5I0K5"/>
<dbReference type="OrthoDB" id="15797at9989"/>
<dbReference type="PhylomeDB" id="Q5I0K5"/>
<dbReference type="TreeFam" id="TF329757"/>
<dbReference type="Reactome" id="R-RNO-156588">
    <property type="pathway name" value="Glucuronidation"/>
</dbReference>
<dbReference type="PRO" id="PR:Q5I0K5"/>
<dbReference type="Proteomes" id="UP000002494">
    <property type="component" value="Chromosome 11"/>
</dbReference>
<dbReference type="Bgee" id="ENSRNOG00000043107">
    <property type="expression patterns" value="Expressed in heart and 18 other cell types or tissues"/>
</dbReference>
<dbReference type="ExpressionAtlas" id="Q5I0K5">
    <property type="expression patterns" value="baseline and differential"/>
</dbReference>
<dbReference type="GO" id="GO:0005829">
    <property type="term" value="C:cytosol"/>
    <property type="evidence" value="ECO:0000266"/>
    <property type="project" value="RGD"/>
</dbReference>
<dbReference type="GO" id="GO:0005739">
    <property type="term" value="C:mitochondrion"/>
    <property type="evidence" value="ECO:0000250"/>
    <property type="project" value="UniProtKB"/>
</dbReference>
<dbReference type="GO" id="GO:0004553">
    <property type="term" value="F:hydrolase activity, hydrolyzing O-glycosyl compounds"/>
    <property type="evidence" value="ECO:0000266"/>
    <property type="project" value="RGD"/>
</dbReference>
<dbReference type="GO" id="GO:0102390">
    <property type="term" value="F:mycophenolic acid acyl-glucuronide esterase activity"/>
    <property type="evidence" value="ECO:0007669"/>
    <property type="project" value="UniProtKB-EC"/>
</dbReference>
<dbReference type="GO" id="GO:0008474">
    <property type="term" value="F:palmitoyl-(protein) hydrolase activity"/>
    <property type="evidence" value="ECO:0000250"/>
    <property type="project" value="UniProtKB"/>
</dbReference>
<dbReference type="GO" id="GO:0002084">
    <property type="term" value="P:protein depalmitoylation"/>
    <property type="evidence" value="ECO:0000250"/>
    <property type="project" value="UniProtKB"/>
</dbReference>
<dbReference type="GO" id="GO:0006805">
    <property type="term" value="P:xenobiotic metabolic process"/>
    <property type="evidence" value="ECO:0000266"/>
    <property type="project" value="RGD"/>
</dbReference>
<dbReference type="FunFam" id="3.40.50.1820:FF:000164">
    <property type="entry name" value="Mycophenolic acid acyl-glucuronide esterase, mitochondrial"/>
    <property type="match status" value="1"/>
</dbReference>
<dbReference type="Gene3D" id="3.40.50.1820">
    <property type="entry name" value="alpha/beta hydrolase"/>
    <property type="match status" value="1"/>
</dbReference>
<dbReference type="InterPro" id="IPR000073">
    <property type="entry name" value="AB_hydrolase_1"/>
</dbReference>
<dbReference type="InterPro" id="IPR029058">
    <property type="entry name" value="AB_hydrolase_fold"/>
</dbReference>
<dbReference type="InterPro" id="IPR052382">
    <property type="entry name" value="ABHD10_acyl-thioesterase"/>
</dbReference>
<dbReference type="PANTHER" id="PTHR16138">
    <property type="entry name" value="MYCOPHENOLIC ACID ACYL-GLUCURONIDE ESTERASE, MITOCHONDRIAL"/>
    <property type="match status" value="1"/>
</dbReference>
<dbReference type="PANTHER" id="PTHR16138:SF7">
    <property type="entry name" value="PALMITOYL-PROTEIN THIOESTERASE ABHD10, MITOCHONDRIAL"/>
    <property type="match status" value="1"/>
</dbReference>
<dbReference type="Pfam" id="PF00561">
    <property type="entry name" value="Abhydrolase_1"/>
    <property type="match status" value="1"/>
</dbReference>
<dbReference type="SUPFAM" id="SSF53474">
    <property type="entry name" value="alpha/beta-Hydrolases"/>
    <property type="match status" value="1"/>
</dbReference>